<gene>
    <name evidence="1" type="primary">amiF</name>
    <name type="ordered locus">BCA_4044</name>
</gene>
<feature type="chain" id="PRO_1000165038" description="Formamidase">
    <location>
        <begin position="1"/>
        <end position="332"/>
    </location>
</feature>
<feature type="domain" description="CN hydrolase" evidence="2">
    <location>
        <begin position="14"/>
        <end position="259"/>
    </location>
</feature>
<feature type="active site" description="Proton acceptor" evidence="1">
    <location>
        <position position="60"/>
    </location>
</feature>
<feature type="active site" description="Proton donor" evidence="1">
    <location>
        <position position="132"/>
    </location>
</feature>
<feature type="active site" description="Nucleophile" evidence="1">
    <location>
        <position position="165"/>
    </location>
</feature>
<reference key="1">
    <citation type="submission" date="2009-02" db="EMBL/GenBank/DDBJ databases">
        <title>Genome sequence of Bacillus cereus 03BB102.</title>
        <authorList>
            <person name="Dodson R.J."/>
            <person name="Jackson P."/>
            <person name="Munk A.C."/>
            <person name="Brettin T."/>
            <person name="Bruce D."/>
            <person name="Detter C."/>
            <person name="Tapia R."/>
            <person name="Han C."/>
            <person name="Sutton G."/>
            <person name="Sims D."/>
        </authorList>
    </citation>
    <scope>NUCLEOTIDE SEQUENCE [LARGE SCALE GENOMIC DNA]</scope>
    <source>
        <strain>03BB102</strain>
    </source>
</reference>
<evidence type="ECO:0000255" key="1">
    <source>
        <dbReference type="HAMAP-Rule" id="MF_01243"/>
    </source>
</evidence>
<evidence type="ECO:0000255" key="2">
    <source>
        <dbReference type="PROSITE-ProRule" id="PRU00054"/>
    </source>
</evidence>
<organism>
    <name type="scientific">Bacillus cereus (strain 03BB102)</name>
    <dbReference type="NCBI Taxonomy" id="572264"/>
    <lineage>
        <taxon>Bacteria</taxon>
        <taxon>Bacillati</taxon>
        <taxon>Bacillota</taxon>
        <taxon>Bacilli</taxon>
        <taxon>Bacillales</taxon>
        <taxon>Bacillaceae</taxon>
        <taxon>Bacillus</taxon>
        <taxon>Bacillus cereus group</taxon>
    </lineage>
</organism>
<keyword id="KW-0378">Hydrolase</keyword>
<sequence length="332" mass="36808">MGSSGSMVKPISGFLTALIQYPVPVVESRADIDKQIKQIIKTIHSTKAGYPGLELIVFPEYSTQGLNTKKWTTEEFLCTVPGPETDLFAEACKESEVYGVFSIMERNPDGGEPYNTAIIIDPQGEMILKYRKLNPWVPVEPWKAGDLGLPVCDGPGGSKLAVCICHDGMFPEVAREAAYKGANVLIRISGYSTQVSEQWMLTNRSNAWQNLMYTLSVNLAGYDGVFYYFGEGQVCNFDGTTLVQGHRNPWEIVTAEVYPELADQARLGWGLENNIYNLGSRGYVATPGGVKENPYTFVKDLAEGKYKVPWEDEIKVKDGTIYGYPVKKTIHS</sequence>
<accession>C1EPV3</accession>
<protein>
    <recommendedName>
        <fullName evidence="1">Formamidase</fullName>
        <ecNumber evidence="1">3.5.1.49</ecNumber>
    </recommendedName>
    <alternativeName>
        <fullName evidence="1">Formamide amidohydrolase</fullName>
    </alternativeName>
</protein>
<proteinExistence type="inferred from homology"/>
<name>AMIF_BACC3</name>
<comment type="function">
    <text evidence="1">Is an aliphatic amidase with a restricted substrate specificity, as it only hydrolyzes formamide.</text>
</comment>
<comment type="catalytic activity">
    <reaction evidence="1">
        <text>formamide + H2O = formate + NH4(+)</text>
        <dbReference type="Rhea" id="RHEA:21948"/>
        <dbReference type="ChEBI" id="CHEBI:15377"/>
        <dbReference type="ChEBI" id="CHEBI:15740"/>
        <dbReference type="ChEBI" id="CHEBI:16397"/>
        <dbReference type="ChEBI" id="CHEBI:28938"/>
        <dbReference type="EC" id="3.5.1.49"/>
    </reaction>
</comment>
<comment type="similarity">
    <text evidence="1">Belongs to the carbon-nitrogen hydrolase superfamily. Aliphatic amidase family.</text>
</comment>
<dbReference type="EC" id="3.5.1.49" evidence="1"/>
<dbReference type="EMBL" id="CP001407">
    <property type="protein sequence ID" value="ACO29387.1"/>
    <property type="molecule type" value="Genomic_DNA"/>
</dbReference>
<dbReference type="RefSeq" id="WP_000535791.1">
    <property type="nucleotide sequence ID" value="NZ_CP009318.1"/>
</dbReference>
<dbReference type="SMR" id="C1EPV3"/>
<dbReference type="KEGG" id="bcx:BCA_4044"/>
<dbReference type="PATRIC" id="fig|572264.18.peg.3996"/>
<dbReference type="Proteomes" id="UP000002210">
    <property type="component" value="Chromosome"/>
</dbReference>
<dbReference type="GO" id="GO:0004328">
    <property type="term" value="F:formamidase activity"/>
    <property type="evidence" value="ECO:0007669"/>
    <property type="project" value="UniProtKB-UniRule"/>
</dbReference>
<dbReference type="GO" id="GO:0050126">
    <property type="term" value="F:N-carbamoylputrescine amidase activity"/>
    <property type="evidence" value="ECO:0007669"/>
    <property type="project" value="TreeGrafter"/>
</dbReference>
<dbReference type="GO" id="GO:0033388">
    <property type="term" value="P:putrescine biosynthetic process from arginine"/>
    <property type="evidence" value="ECO:0007669"/>
    <property type="project" value="TreeGrafter"/>
</dbReference>
<dbReference type="CDD" id="cd07565">
    <property type="entry name" value="aliphatic_amidase"/>
    <property type="match status" value="1"/>
</dbReference>
<dbReference type="Gene3D" id="3.60.110.10">
    <property type="entry name" value="Carbon-nitrogen hydrolase"/>
    <property type="match status" value="1"/>
</dbReference>
<dbReference type="HAMAP" id="MF_01243">
    <property type="entry name" value="Formamidase"/>
    <property type="match status" value="1"/>
</dbReference>
<dbReference type="InterPro" id="IPR050345">
    <property type="entry name" value="Aliph_Amidase/BUP"/>
</dbReference>
<dbReference type="InterPro" id="IPR003010">
    <property type="entry name" value="C-N_Hydrolase"/>
</dbReference>
<dbReference type="InterPro" id="IPR036526">
    <property type="entry name" value="C-N_Hydrolase_sf"/>
</dbReference>
<dbReference type="InterPro" id="IPR022843">
    <property type="entry name" value="Formamidase"/>
</dbReference>
<dbReference type="NCBIfam" id="NF009803">
    <property type="entry name" value="PRK13287.1"/>
    <property type="match status" value="1"/>
</dbReference>
<dbReference type="PANTHER" id="PTHR43674:SF15">
    <property type="entry name" value="FORMAMIDASE"/>
    <property type="match status" value="1"/>
</dbReference>
<dbReference type="PANTHER" id="PTHR43674">
    <property type="entry name" value="NITRILASE C965.09-RELATED"/>
    <property type="match status" value="1"/>
</dbReference>
<dbReference type="Pfam" id="PF00795">
    <property type="entry name" value="CN_hydrolase"/>
    <property type="match status" value="1"/>
</dbReference>
<dbReference type="SUPFAM" id="SSF56317">
    <property type="entry name" value="Carbon-nitrogen hydrolase"/>
    <property type="match status" value="1"/>
</dbReference>
<dbReference type="PROSITE" id="PS50263">
    <property type="entry name" value="CN_HYDROLASE"/>
    <property type="match status" value="1"/>
</dbReference>